<name>RL1_STRMK</name>
<sequence length="232" mass="23977">MAQTKREKAIKAAVVPGKAYAFEDAINILKSATKAKFVESIDVAVRLGVDAKKSDQQVRGSTVLPAGTGKSVRVAVFAPAGAKADEALAAGAEAVGMDDLAEKMQAGDLNYDVVIATPDAMRVVGKLGTVLGPRGLMPNPKVGTVSPNPGEAVKNAKSGQVRYRTDKAGIIHCTIGKADFAEDALKSNLTALLLDLIKAKPATSKGTYLQKVSVSSTMGPGVTVDQSSLTLK</sequence>
<accession>B2FQ35</accession>
<proteinExistence type="inferred from homology"/>
<gene>
    <name evidence="1" type="primary">rplA</name>
    <name type="ordered locus">Smlt0895</name>
</gene>
<comment type="function">
    <text evidence="1">Binds directly to 23S rRNA. The L1 stalk is quite mobile in the ribosome, and is involved in E site tRNA release.</text>
</comment>
<comment type="function">
    <text evidence="1">Protein L1 is also a translational repressor protein, it controls the translation of the L11 operon by binding to its mRNA.</text>
</comment>
<comment type="subunit">
    <text evidence="1">Part of the 50S ribosomal subunit.</text>
</comment>
<comment type="similarity">
    <text evidence="1">Belongs to the universal ribosomal protein uL1 family.</text>
</comment>
<dbReference type="EMBL" id="AM743169">
    <property type="protein sequence ID" value="CAQ44465.1"/>
    <property type="molecule type" value="Genomic_DNA"/>
</dbReference>
<dbReference type="RefSeq" id="WP_004154350.1">
    <property type="nucleotide sequence ID" value="NC_010943.1"/>
</dbReference>
<dbReference type="SMR" id="B2FQ35"/>
<dbReference type="EnsemblBacteria" id="CAQ44465">
    <property type="protein sequence ID" value="CAQ44465"/>
    <property type="gene ID" value="Smlt0895"/>
</dbReference>
<dbReference type="GeneID" id="93831926"/>
<dbReference type="KEGG" id="sml:Smlt0895"/>
<dbReference type="eggNOG" id="COG0081">
    <property type="taxonomic scope" value="Bacteria"/>
</dbReference>
<dbReference type="HOGENOM" id="CLU_062853_0_0_6"/>
<dbReference type="Proteomes" id="UP000008840">
    <property type="component" value="Chromosome"/>
</dbReference>
<dbReference type="GO" id="GO:0022625">
    <property type="term" value="C:cytosolic large ribosomal subunit"/>
    <property type="evidence" value="ECO:0007669"/>
    <property type="project" value="TreeGrafter"/>
</dbReference>
<dbReference type="GO" id="GO:0019843">
    <property type="term" value="F:rRNA binding"/>
    <property type="evidence" value="ECO:0007669"/>
    <property type="project" value="UniProtKB-UniRule"/>
</dbReference>
<dbReference type="GO" id="GO:0003735">
    <property type="term" value="F:structural constituent of ribosome"/>
    <property type="evidence" value="ECO:0007669"/>
    <property type="project" value="InterPro"/>
</dbReference>
<dbReference type="GO" id="GO:0000049">
    <property type="term" value="F:tRNA binding"/>
    <property type="evidence" value="ECO:0007669"/>
    <property type="project" value="UniProtKB-KW"/>
</dbReference>
<dbReference type="GO" id="GO:0006417">
    <property type="term" value="P:regulation of translation"/>
    <property type="evidence" value="ECO:0007669"/>
    <property type="project" value="UniProtKB-KW"/>
</dbReference>
<dbReference type="GO" id="GO:0006412">
    <property type="term" value="P:translation"/>
    <property type="evidence" value="ECO:0007669"/>
    <property type="project" value="UniProtKB-UniRule"/>
</dbReference>
<dbReference type="CDD" id="cd00403">
    <property type="entry name" value="Ribosomal_L1"/>
    <property type="match status" value="1"/>
</dbReference>
<dbReference type="FunFam" id="3.40.50.790:FF:000001">
    <property type="entry name" value="50S ribosomal protein L1"/>
    <property type="match status" value="1"/>
</dbReference>
<dbReference type="Gene3D" id="3.30.190.20">
    <property type="match status" value="1"/>
</dbReference>
<dbReference type="Gene3D" id="3.40.50.790">
    <property type="match status" value="1"/>
</dbReference>
<dbReference type="HAMAP" id="MF_01318_B">
    <property type="entry name" value="Ribosomal_uL1_B"/>
    <property type="match status" value="1"/>
</dbReference>
<dbReference type="InterPro" id="IPR005878">
    <property type="entry name" value="Ribosom_uL1_bac-type"/>
</dbReference>
<dbReference type="InterPro" id="IPR002143">
    <property type="entry name" value="Ribosomal_uL1"/>
</dbReference>
<dbReference type="InterPro" id="IPR023674">
    <property type="entry name" value="Ribosomal_uL1-like"/>
</dbReference>
<dbReference type="InterPro" id="IPR028364">
    <property type="entry name" value="Ribosomal_uL1/biogenesis"/>
</dbReference>
<dbReference type="InterPro" id="IPR016095">
    <property type="entry name" value="Ribosomal_uL1_3-a/b-sand"/>
</dbReference>
<dbReference type="InterPro" id="IPR023673">
    <property type="entry name" value="Ribosomal_uL1_CS"/>
</dbReference>
<dbReference type="NCBIfam" id="TIGR01169">
    <property type="entry name" value="rplA_bact"/>
    <property type="match status" value="1"/>
</dbReference>
<dbReference type="PANTHER" id="PTHR36427">
    <property type="entry name" value="54S RIBOSOMAL PROTEIN L1, MITOCHONDRIAL"/>
    <property type="match status" value="1"/>
</dbReference>
<dbReference type="PANTHER" id="PTHR36427:SF3">
    <property type="entry name" value="LARGE RIBOSOMAL SUBUNIT PROTEIN UL1M"/>
    <property type="match status" value="1"/>
</dbReference>
<dbReference type="Pfam" id="PF00687">
    <property type="entry name" value="Ribosomal_L1"/>
    <property type="match status" value="1"/>
</dbReference>
<dbReference type="PIRSF" id="PIRSF002155">
    <property type="entry name" value="Ribosomal_L1"/>
    <property type="match status" value="1"/>
</dbReference>
<dbReference type="SUPFAM" id="SSF56808">
    <property type="entry name" value="Ribosomal protein L1"/>
    <property type="match status" value="1"/>
</dbReference>
<dbReference type="PROSITE" id="PS01199">
    <property type="entry name" value="RIBOSOMAL_L1"/>
    <property type="match status" value="1"/>
</dbReference>
<feature type="chain" id="PRO_1000141466" description="Large ribosomal subunit protein uL1">
    <location>
        <begin position="1"/>
        <end position="232"/>
    </location>
</feature>
<organism>
    <name type="scientific">Stenotrophomonas maltophilia (strain K279a)</name>
    <dbReference type="NCBI Taxonomy" id="522373"/>
    <lineage>
        <taxon>Bacteria</taxon>
        <taxon>Pseudomonadati</taxon>
        <taxon>Pseudomonadota</taxon>
        <taxon>Gammaproteobacteria</taxon>
        <taxon>Lysobacterales</taxon>
        <taxon>Lysobacteraceae</taxon>
        <taxon>Stenotrophomonas</taxon>
        <taxon>Stenotrophomonas maltophilia group</taxon>
    </lineage>
</organism>
<evidence type="ECO:0000255" key="1">
    <source>
        <dbReference type="HAMAP-Rule" id="MF_01318"/>
    </source>
</evidence>
<evidence type="ECO:0000305" key="2"/>
<protein>
    <recommendedName>
        <fullName evidence="1">Large ribosomal subunit protein uL1</fullName>
    </recommendedName>
    <alternativeName>
        <fullName evidence="2">50S ribosomal protein L1</fullName>
    </alternativeName>
</protein>
<keyword id="KW-1185">Reference proteome</keyword>
<keyword id="KW-0678">Repressor</keyword>
<keyword id="KW-0687">Ribonucleoprotein</keyword>
<keyword id="KW-0689">Ribosomal protein</keyword>
<keyword id="KW-0694">RNA-binding</keyword>
<keyword id="KW-0699">rRNA-binding</keyword>
<keyword id="KW-0810">Translation regulation</keyword>
<keyword id="KW-0820">tRNA-binding</keyword>
<reference key="1">
    <citation type="journal article" date="2008" name="Genome Biol.">
        <title>The complete genome, comparative and functional analysis of Stenotrophomonas maltophilia reveals an organism heavily shielded by drug resistance determinants.</title>
        <authorList>
            <person name="Crossman L.C."/>
            <person name="Gould V.C."/>
            <person name="Dow J.M."/>
            <person name="Vernikos G.S."/>
            <person name="Okazaki A."/>
            <person name="Sebaihia M."/>
            <person name="Saunders D."/>
            <person name="Arrowsmith C."/>
            <person name="Carver T."/>
            <person name="Peters N."/>
            <person name="Adlem E."/>
            <person name="Kerhornou A."/>
            <person name="Lord A."/>
            <person name="Murphy L."/>
            <person name="Seeger K."/>
            <person name="Squares R."/>
            <person name="Rutter S."/>
            <person name="Quail M.A."/>
            <person name="Rajandream M.A."/>
            <person name="Harris D."/>
            <person name="Churcher C."/>
            <person name="Bentley S.D."/>
            <person name="Parkhill J."/>
            <person name="Thomson N.R."/>
            <person name="Avison M.B."/>
        </authorList>
    </citation>
    <scope>NUCLEOTIDE SEQUENCE [LARGE SCALE GENOMIC DNA]</scope>
    <source>
        <strain>K279a</strain>
    </source>
</reference>